<name>TIG_PARDP</name>
<comment type="function">
    <text evidence="1">Involved in protein export. Acts as a chaperone by maintaining the newly synthesized protein in an open conformation. Functions as a peptidyl-prolyl cis-trans isomerase.</text>
</comment>
<comment type="catalytic activity">
    <reaction evidence="1">
        <text>[protein]-peptidylproline (omega=180) = [protein]-peptidylproline (omega=0)</text>
        <dbReference type="Rhea" id="RHEA:16237"/>
        <dbReference type="Rhea" id="RHEA-COMP:10747"/>
        <dbReference type="Rhea" id="RHEA-COMP:10748"/>
        <dbReference type="ChEBI" id="CHEBI:83833"/>
        <dbReference type="ChEBI" id="CHEBI:83834"/>
        <dbReference type="EC" id="5.2.1.8"/>
    </reaction>
</comment>
<comment type="subcellular location">
    <subcellularLocation>
        <location>Cytoplasm</location>
    </subcellularLocation>
    <text evidence="1">About half TF is bound to the ribosome near the polypeptide exit tunnel while the other half is free in the cytoplasm.</text>
</comment>
<comment type="domain">
    <text evidence="1">Consists of 3 domains; the N-terminus binds the ribosome, the middle domain has PPIase activity, while the C-terminus has intrinsic chaperone activity on its own.</text>
</comment>
<comment type="similarity">
    <text evidence="1">Belongs to the FKBP-type PPIase family. Tig subfamily.</text>
</comment>
<comment type="sequence caution" evidence="2">
    <conflict type="erroneous initiation">
        <sequence resource="EMBL-CDS" id="ABL68998"/>
    </conflict>
</comment>
<proteinExistence type="inferred from homology"/>
<feature type="chain" id="PRO_0000322448" description="Trigger factor">
    <location>
        <begin position="1"/>
        <end position="444"/>
    </location>
</feature>
<feature type="domain" description="PPIase FKBP-type" evidence="1">
    <location>
        <begin position="166"/>
        <end position="251"/>
    </location>
</feature>
<accession>A1B0F4</accession>
<protein>
    <recommendedName>
        <fullName evidence="1">Trigger factor</fullName>
        <shortName evidence="1">TF</shortName>
        <ecNumber evidence="1">5.2.1.8</ecNumber>
    </recommendedName>
    <alternativeName>
        <fullName evidence="1">PPIase</fullName>
    </alternativeName>
</protein>
<keyword id="KW-0131">Cell cycle</keyword>
<keyword id="KW-0132">Cell division</keyword>
<keyword id="KW-0143">Chaperone</keyword>
<keyword id="KW-0963">Cytoplasm</keyword>
<keyword id="KW-0413">Isomerase</keyword>
<keyword id="KW-1185">Reference proteome</keyword>
<keyword id="KW-0697">Rotamase</keyword>
<gene>
    <name evidence="1" type="primary">tig</name>
    <name type="ordered locus">Pden_0887</name>
</gene>
<reference key="1">
    <citation type="submission" date="2006-12" db="EMBL/GenBank/DDBJ databases">
        <title>Complete sequence of chromosome 1 of Paracoccus denitrificans PD1222.</title>
        <authorList>
            <person name="Copeland A."/>
            <person name="Lucas S."/>
            <person name="Lapidus A."/>
            <person name="Barry K."/>
            <person name="Detter J.C."/>
            <person name="Glavina del Rio T."/>
            <person name="Hammon N."/>
            <person name="Israni S."/>
            <person name="Dalin E."/>
            <person name="Tice H."/>
            <person name="Pitluck S."/>
            <person name="Munk A.C."/>
            <person name="Brettin T."/>
            <person name="Bruce D."/>
            <person name="Han C."/>
            <person name="Tapia R."/>
            <person name="Gilna P."/>
            <person name="Schmutz J."/>
            <person name="Larimer F."/>
            <person name="Land M."/>
            <person name="Hauser L."/>
            <person name="Kyrpides N."/>
            <person name="Lykidis A."/>
            <person name="Spiro S."/>
            <person name="Richardson D.J."/>
            <person name="Moir J.W.B."/>
            <person name="Ferguson S.J."/>
            <person name="van Spanning R.J.M."/>
            <person name="Richardson P."/>
        </authorList>
    </citation>
    <scope>NUCLEOTIDE SEQUENCE [LARGE SCALE GENOMIC DNA]</scope>
    <source>
        <strain>Pd 1222</strain>
    </source>
</reference>
<evidence type="ECO:0000255" key="1">
    <source>
        <dbReference type="HAMAP-Rule" id="MF_00303"/>
    </source>
</evidence>
<evidence type="ECO:0000305" key="2"/>
<organism>
    <name type="scientific">Paracoccus denitrificans (strain Pd 1222)</name>
    <dbReference type="NCBI Taxonomy" id="318586"/>
    <lineage>
        <taxon>Bacteria</taxon>
        <taxon>Pseudomonadati</taxon>
        <taxon>Pseudomonadota</taxon>
        <taxon>Alphaproteobacteria</taxon>
        <taxon>Rhodobacterales</taxon>
        <taxon>Paracoccaceae</taxon>
        <taxon>Paracoccus</taxon>
    </lineage>
</organism>
<dbReference type="EC" id="5.2.1.8" evidence="1"/>
<dbReference type="EMBL" id="CP000489">
    <property type="protein sequence ID" value="ABL68998.1"/>
    <property type="status" value="ALT_INIT"/>
    <property type="molecule type" value="Genomic_DNA"/>
</dbReference>
<dbReference type="RefSeq" id="WP_041529783.1">
    <property type="nucleotide sequence ID" value="NC_008686.1"/>
</dbReference>
<dbReference type="SMR" id="A1B0F4"/>
<dbReference type="STRING" id="318586.Pden_0887"/>
<dbReference type="EnsemblBacteria" id="ABL68998">
    <property type="protein sequence ID" value="ABL68998"/>
    <property type="gene ID" value="Pden_0887"/>
</dbReference>
<dbReference type="GeneID" id="93452109"/>
<dbReference type="KEGG" id="pde:Pden_0887"/>
<dbReference type="eggNOG" id="COG0544">
    <property type="taxonomic scope" value="Bacteria"/>
</dbReference>
<dbReference type="HOGENOM" id="CLU_033058_2_2_5"/>
<dbReference type="OrthoDB" id="9767721at2"/>
<dbReference type="Proteomes" id="UP000000361">
    <property type="component" value="Chromosome 1"/>
</dbReference>
<dbReference type="GO" id="GO:0005737">
    <property type="term" value="C:cytoplasm"/>
    <property type="evidence" value="ECO:0007669"/>
    <property type="project" value="UniProtKB-SubCell"/>
</dbReference>
<dbReference type="GO" id="GO:0003755">
    <property type="term" value="F:peptidyl-prolyl cis-trans isomerase activity"/>
    <property type="evidence" value="ECO:0007669"/>
    <property type="project" value="UniProtKB-UniRule"/>
</dbReference>
<dbReference type="GO" id="GO:0051301">
    <property type="term" value="P:cell division"/>
    <property type="evidence" value="ECO:0007669"/>
    <property type="project" value="UniProtKB-KW"/>
</dbReference>
<dbReference type="GO" id="GO:0006457">
    <property type="term" value="P:protein folding"/>
    <property type="evidence" value="ECO:0007669"/>
    <property type="project" value="UniProtKB-UniRule"/>
</dbReference>
<dbReference type="GO" id="GO:0015031">
    <property type="term" value="P:protein transport"/>
    <property type="evidence" value="ECO:0007669"/>
    <property type="project" value="UniProtKB-UniRule"/>
</dbReference>
<dbReference type="FunFam" id="3.10.50.40:FF:000001">
    <property type="entry name" value="Trigger factor"/>
    <property type="match status" value="1"/>
</dbReference>
<dbReference type="Gene3D" id="3.10.50.40">
    <property type="match status" value="1"/>
</dbReference>
<dbReference type="Gene3D" id="3.30.70.1050">
    <property type="entry name" value="Trigger factor ribosome-binding domain"/>
    <property type="match status" value="1"/>
</dbReference>
<dbReference type="Gene3D" id="1.10.3120.10">
    <property type="entry name" value="Trigger factor, C-terminal domain"/>
    <property type="match status" value="1"/>
</dbReference>
<dbReference type="HAMAP" id="MF_00303">
    <property type="entry name" value="Trigger_factor_Tig"/>
    <property type="match status" value="1"/>
</dbReference>
<dbReference type="InterPro" id="IPR046357">
    <property type="entry name" value="PPIase_dom_sf"/>
</dbReference>
<dbReference type="InterPro" id="IPR001179">
    <property type="entry name" value="PPIase_FKBP_dom"/>
</dbReference>
<dbReference type="InterPro" id="IPR005215">
    <property type="entry name" value="Trig_fac"/>
</dbReference>
<dbReference type="InterPro" id="IPR008880">
    <property type="entry name" value="Trigger_fac_C"/>
</dbReference>
<dbReference type="InterPro" id="IPR037041">
    <property type="entry name" value="Trigger_fac_C_sf"/>
</dbReference>
<dbReference type="InterPro" id="IPR008881">
    <property type="entry name" value="Trigger_fac_ribosome-bd_bac"/>
</dbReference>
<dbReference type="InterPro" id="IPR036611">
    <property type="entry name" value="Trigger_fac_ribosome-bd_sf"/>
</dbReference>
<dbReference type="InterPro" id="IPR027304">
    <property type="entry name" value="Trigger_fact/SurA_dom_sf"/>
</dbReference>
<dbReference type="NCBIfam" id="TIGR00115">
    <property type="entry name" value="tig"/>
    <property type="match status" value="1"/>
</dbReference>
<dbReference type="Pfam" id="PF00254">
    <property type="entry name" value="FKBP_C"/>
    <property type="match status" value="1"/>
</dbReference>
<dbReference type="Pfam" id="PF05698">
    <property type="entry name" value="Trigger_C"/>
    <property type="match status" value="1"/>
</dbReference>
<dbReference type="Pfam" id="PF05697">
    <property type="entry name" value="Trigger_N"/>
    <property type="match status" value="1"/>
</dbReference>
<dbReference type="PIRSF" id="PIRSF003095">
    <property type="entry name" value="Trigger_factor"/>
    <property type="match status" value="1"/>
</dbReference>
<dbReference type="SUPFAM" id="SSF54534">
    <property type="entry name" value="FKBP-like"/>
    <property type="match status" value="1"/>
</dbReference>
<dbReference type="SUPFAM" id="SSF109998">
    <property type="entry name" value="Triger factor/SurA peptide-binding domain-like"/>
    <property type="match status" value="1"/>
</dbReference>
<dbReference type="SUPFAM" id="SSF102735">
    <property type="entry name" value="Trigger factor ribosome-binding domain"/>
    <property type="match status" value="1"/>
</dbReference>
<dbReference type="PROSITE" id="PS50059">
    <property type="entry name" value="FKBP_PPIASE"/>
    <property type="match status" value="1"/>
</dbReference>
<sequence>MQVKETQNEGLKRGYEFTLPAADLAAQVDAKLKEAQPEVEMKGFRKGKVPMALLKKQFGQRIMGDAMQEAIDKALRDHLEKSGDRPALQPKIEMVNGETWKEGDDVVVTVAYEALPAIPEADLSGVELERLVVEASEEQVTEALENLAKNAQSFEDRKKGTKAKDGDQIVIDFKGMVDGEAFEGGSAEDYPLVLGSKSFIPGFEEQLVGAKAGDEVKVEVKFPEDYGHPALAGKDAVFETTVKAVKAPKAAEIDDELAKKFGAESLDALKGQIRERLEAEYKGASRQVLKRTLLDRLDEMVKFDLPESLVEAEAHQIAHQLWHEEHPEEHGHNHGEIEPTDEHKKLAERRVRLGLLLAEIGQKAEITVSDQEMTQAVLRQARQFPGQERAFFEFIQQNPQAQQQLRAPIFEDKVVDHIVEGAKVSEKPVTKDELEKAIEALDQV</sequence>